<name>Y3091_CLOBB</name>
<feature type="chain" id="PRO_1000139638" description="UPF0229 protein CLL_A3091">
    <location>
        <begin position="1"/>
        <end position="391"/>
    </location>
</feature>
<feature type="region of interest" description="Disordered" evidence="2">
    <location>
        <begin position="1"/>
        <end position="23"/>
    </location>
</feature>
<feature type="region of interest" description="Disordered" evidence="2">
    <location>
        <begin position="75"/>
        <end position="107"/>
    </location>
</feature>
<feature type="compositionally biased region" description="Basic and acidic residues" evidence="2">
    <location>
        <begin position="80"/>
        <end position="92"/>
    </location>
</feature>
<dbReference type="EMBL" id="CP001056">
    <property type="protein sequence ID" value="ACD22663.1"/>
    <property type="molecule type" value="Genomic_DNA"/>
</dbReference>
<dbReference type="SMR" id="B2TQ00"/>
<dbReference type="KEGG" id="cbk:CLL_A3091"/>
<dbReference type="PATRIC" id="fig|935198.13.peg.3055"/>
<dbReference type="HOGENOM" id="CLU_049702_2_0_9"/>
<dbReference type="Proteomes" id="UP000001195">
    <property type="component" value="Chromosome"/>
</dbReference>
<dbReference type="HAMAP" id="MF_01232">
    <property type="entry name" value="UPF0229"/>
    <property type="match status" value="1"/>
</dbReference>
<dbReference type="InterPro" id="IPR014230">
    <property type="entry name" value="Spore_YhbH"/>
</dbReference>
<dbReference type="InterPro" id="IPR006698">
    <property type="entry name" value="UPF0229"/>
</dbReference>
<dbReference type="InterPro" id="IPR036465">
    <property type="entry name" value="vWFA_dom_sf"/>
</dbReference>
<dbReference type="NCBIfam" id="TIGR02877">
    <property type="entry name" value="spore_yhbH"/>
    <property type="match status" value="1"/>
</dbReference>
<dbReference type="PANTHER" id="PTHR30510">
    <property type="entry name" value="UPF0229 PROTEIN YEAH"/>
    <property type="match status" value="1"/>
</dbReference>
<dbReference type="PANTHER" id="PTHR30510:SF2">
    <property type="entry name" value="UPF0229 PROTEIN YEAH"/>
    <property type="match status" value="1"/>
</dbReference>
<dbReference type="Pfam" id="PF04285">
    <property type="entry name" value="DUF444"/>
    <property type="match status" value="2"/>
</dbReference>
<dbReference type="SUPFAM" id="SSF53300">
    <property type="entry name" value="vWA-like"/>
    <property type="match status" value="1"/>
</dbReference>
<proteinExistence type="inferred from homology"/>
<gene>
    <name type="ordered locus">CLL_A3091</name>
</gene>
<reference key="1">
    <citation type="submission" date="2008-04" db="EMBL/GenBank/DDBJ databases">
        <title>Complete sequence of Clostridium botulinum strain Eklund.</title>
        <authorList>
            <person name="Brinkac L.M."/>
            <person name="Brown J.L."/>
            <person name="Bruce D."/>
            <person name="Detter C."/>
            <person name="Munk C."/>
            <person name="Smith L.A."/>
            <person name="Smith T.J."/>
            <person name="Sutton G."/>
            <person name="Brettin T.S."/>
        </authorList>
    </citation>
    <scope>NUCLEOTIDE SEQUENCE [LARGE SCALE GENOMIC DNA]</scope>
    <source>
        <strain>Eklund 17B / Type B</strain>
    </source>
</reference>
<protein>
    <recommendedName>
        <fullName evidence="1">UPF0229 protein CLL_A3091</fullName>
    </recommendedName>
</protein>
<organism>
    <name type="scientific">Clostridium botulinum (strain Eklund 17B / Type B)</name>
    <dbReference type="NCBI Taxonomy" id="935198"/>
    <lineage>
        <taxon>Bacteria</taxon>
        <taxon>Bacillati</taxon>
        <taxon>Bacillota</taxon>
        <taxon>Clostridia</taxon>
        <taxon>Eubacteriales</taxon>
        <taxon>Clostridiaceae</taxon>
        <taxon>Clostridium</taxon>
    </lineage>
</organism>
<comment type="similarity">
    <text evidence="1">Belongs to the UPF0229 family.</text>
</comment>
<evidence type="ECO:0000255" key="1">
    <source>
        <dbReference type="HAMAP-Rule" id="MF_01232"/>
    </source>
</evidence>
<evidence type="ECO:0000256" key="2">
    <source>
        <dbReference type="SAM" id="MobiDB-lite"/>
    </source>
</evidence>
<sequence>MAIFRDRTDKQVDHDRAIEDKRRHRQLVEKSIKENLGDILSEESIVGQSKNKKFKIPIKSIKEYQFVYGKNSKGVATGTGEEKRGDKIESGSKKAMGKGNKGAGNEEGDEIYETEITLDELMEYISDELNLPNLDEKKYSEIITDSCGKKKGYQRHGIRPRLAKKRTVMAKISRKQSKKRALIEEGKDYKTERFPFREEDLRYYKVKMQPKKASNAVMIFIMDASGSMDSTKKYLARSYFFVLSRFLKRKYNNIAFEFIYHTTIAKRVSEYEFFHKSESGGTYISSGIVEAIKLIDEKYPPSEWNIYPVYASDGDNWSEDNVKAIESVKEICKISNMFGYAELLPSTYTQTMYYKFNKEINEKNFISVVIKEKKDLWEALKTMLKQELKED</sequence>
<accession>B2TQ00</accession>